<organism>
    <name type="scientific">Desulfitobacterium hafniense (strain DSM 10664 / DCB-2)</name>
    <dbReference type="NCBI Taxonomy" id="272564"/>
    <lineage>
        <taxon>Bacteria</taxon>
        <taxon>Bacillati</taxon>
        <taxon>Bacillota</taxon>
        <taxon>Clostridia</taxon>
        <taxon>Eubacteriales</taxon>
        <taxon>Desulfitobacteriaceae</taxon>
        <taxon>Desulfitobacterium</taxon>
    </lineage>
</organism>
<evidence type="ECO:0000255" key="1">
    <source>
        <dbReference type="HAMAP-Rule" id="MF_00073"/>
    </source>
</evidence>
<keyword id="KW-0694">RNA-binding</keyword>
<keyword id="KW-0804">Transcription</keyword>
<keyword id="KW-0889">Transcription antitermination</keyword>
<keyword id="KW-0805">Transcription regulation</keyword>
<gene>
    <name evidence="1" type="primary">nusB</name>
    <name type="ordered locus">Dhaf_3504</name>
</gene>
<accession>B8FQ61</accession>
<comment type="function">
    <text evidence="1">Involved in transcription antitermination. Required for transcription of ribosomal RNA (rRNA) genes. Binds specifically to the boxA antiterminator sequence of the ribosomal RNA (rrn) operons.</text>
</comment>
<comment type="similarity">
    <text evidence="1">Belongs to the NusB family.</text>
</comment>
<proteinExistence type="inferred from homology"/>
<name>NUSB_DESHD</name>
<feature type="chain" id="PRO_1000192433" description="Transcription antitermination protein NusB">
    <location>
        <begin position="1"/>
        <end position="148"/>
    </location>
</feature>
<reference key="1">
    <citation type="journal article" date="2012" name="BMC Microbiol.">
        <title>Genome sequence of Desulfitobacterium hafniense DCB-2, a Gram-positive anaerobe capable of dehalogenation and metal reduction.</title>
        <authorList>
            <person name="Kim S.H."/>
            <person name="Harzman C."/>
            <person name="Davis J.K."/>
            <person name="Hutcheson R."/>
            <person name="Broderick J.B."/>
            <person name="Marsh T.L."/>
            <person name="Tiedje J.M."/>
        </authorList>
    </citation>
    <scope>NUCLEOTIDE SEQUENCE [LARGE SCALE GENOMIC DNA]</scope>
    <source>
        <strain>DSM 10664 / DCB-2</strain>
    </source>
</reference>
<dbReference type="EMBL" id="CP001336">
    <property type="protein sequence ID" value="ACL21522.1"/>
    <property type="molecule type" value="Genomic_DNA"/>
</dbReference>
<dbReference type="RefSeq" id="WP_011460271.1">
    <property type="nucleotide sequence ID" value="NC_011830.1"/>
</dbReference>
<dbReference type="SMR" id="B8FQ61"/>
<dbReference type="KEGG" id="dhd:Dhaf_3504"/>
<dbReference type="HOGENOM" id="CLU_087843_3_3_9"/>
<dbReference type="Proteomes" id="UP000007726">
    <property type="component" value="Chromosome"/>
</dbReference>
<dbReference type="GO" id="GO:0005829">
    <property type="term" value="C:cytosol"/>
    <property type="evidence" value="ECO:0007669"/>
    <property type="project" value="TreeGrafter"/>
</dbReference>
<dbReference type="GO" id="GO:0003723">
    <property type="term" value="F:RNA binding"/>
    <property type="evidence" value="ECO:0007669"/>
    <property type="project" value="UniProtKB-UniRule"/>
</dbReference>
<dbReference type="GO" id="GO:0006353">
    <property type="term" value="P:DNA-templated transcription termination"/>
    <property type="evidence" value="ECO:0007669"/>
    <property type="project" value="UniProtKB-UniRule"/>
</dbReference>
<dbReference type="GO" id="GO:0031564">
    <property type="term" value="P:transcription antitermination"/>
    <property type="evidence" value="ECO:0007669"/>
    <property type="project" value="UniProtKB-KW"/>
</dbReference>
<dbReference type="CDD" id="cd00619">
    <property type="entry name" value="Terminator_NusB"/>
    <property type="match status" value="1"/>
</dbReference>
<dbReference type="Gene3D" id="1.10.940.10">
    <property type="entry name" value="NusB-like"/>
    <property type="match status" value="1"/>
</dbReference>
<dbReference type="HAMAP" id="MF_00073">
    <property type="entry name" value="NusB"/>
    <property type="match status" value="1"/>
</dbReference>
<dbReference type="InterPro" id="IPR035926">
    <property type="entry name" value="NusB-like_sf"/>
</dbReference>
<dbReference type="InterPro" id="IPR011605">
    <property type="entry name" value="NusB_fam"/>
</dbReference>
<dbReference type="InterPro" id="IPR006027">
    <property type="entry name" value="NusB_RsmB_TIM44"/>
</dbReference>
<dbReference type="NCBIfam" id="TIGR01951">
    <property type="entry name" value="nusB"/>
    <property type="match status" value="1"/>
</dbReference>
<dbReference type="PANTHER" id="PTHR11078:SF3">
    <property type="entry name" value="ANTITERMINATION NUSB DOMAIN-CONTAINING PROTEIN"/>
    <property type="match status" value="1"/>
</dbReference>
<dbReference type="PANTHER" id="PTHR11078">
    <property type="entry name" value="N UTILIZATION SUBSTANCE PROTEIN B-RELATED"/>
    <property type="match status" value="1"/>
</dbReference>
<dbReference type="Pfam" id="PF01029">
    <property type="entry name" value="NusB"/>
    <property type="match status" value="1"/>
</dbReference>
<dbReference type="SUPFAM" id="SSF48013">
    <property type="entry name" value="NusB-like"/>
    <property type="match status" value="1"/>
</dbReference>
<protein>
    <recommendedName>
        <fullName evidence="1">Transcription antitermination protein NusB</fullName>
    </recommendedName>
    <alternativeName>
        <fullName evidence="1">Antitermination factor NusB</fullName>
    </alternativeName>
</protein>
<sequence>MSRRLARETALQVLFQLEMTGESQDLKSAIHKWADEFAVPEGSIPFAEELAEGTLTHKEVIDENLEKLSEGWSLARMANVDRNLLRLASYEILFRKDIPGRVTINEAIEIAKRYGSEESGKFINGILDKVVESVNKKDEKGNDTLSRD</sequence>